<comment type="function">
    <text evidence="1">Major role in the synthesis of nucleoside triphosphates other than ATP. The ATP gamma phosphate is transferred to the NDP beta phosphate via a ping-pong mechanism, using a phosphorylated active-site intermediate.</text>
</comment>
<comment type="catalytic activity">
    <reaction evidence="1">
        <text>a 2'-deoxyribonucleoside 5'-diphosphate + ATP = a 2'-deoxyribonucleoside 5'-triphosphate + ADP</text>
        <dbReference type="Rhea" id="RHEA:44640"/>
        <dbReference type="ChEBI" id="CHEBI:30616"/>
        <dbReference type="ChEBI" id="CHEBI:61560"/>
        <dbReference type="ChEBI" id="CHEBI:73316"/>
        <dbReference type="ChEBI" id="CHEBI:456216"/>
        <dbReference type="EC" id="2.7.4.6"/>
    </reaction>
</comment>
<comment type="catalytic activity">
    <reaction evidence="1">
        <text>a ribonucleoside 5'-diphosphate + ATP = a ribonucleoside 5'-triphosphate + ADP</text>
        <dbReference type="Rhea" id="RHEA:18113"/>
        <dbReference type="ChEBI" id="CHEBI:30616"/>
        <dbReference type="ChEBI" id="CHEBI:57930"/>
        <dbReference type="ChEBI" id="CHEBI:61557"/>
        <dbReference type="ChEBI" id="CHEBI:456216"/>
        <dbReference type="EC" id="2.7.4.6"/>
    </reaction>
</comment>
<comment type="cofactor">
    <cofactor evidence="1">
        <name>Mg(2+)</name>
        <dbReference type="ChEBI" id="CHEBI:18420"/>
    </cofactor>
</comment>
<comment type="subunit">
    <text evidence="1">Homotetramer.</text>
</comment>
<comment type="subcellular location">
    <subcellularLocation>
        <location evidence="1">Cytoplasm</location>
    </subcellularLocation>
</comment>
<comment type="similarity">
    <text evidence="1">Belongs to the NDK family.</text>
</comment>
<reference key="1">
    <citation type="journal article" date="2008" name="PLoS Genet.">
        <title>Complete genome sequence of the complex carbohydrate-degrading marine bacterium, Saccharophagus degradans strain 2-40 T.</title>
        <authorList>
            <person name="Weiner R.M."/>
            <person name="Taylor L.E. II"/>
            <person name="Henrissat B."/>
            <person name="Hauser L."/>
            <person name="Land M."/>
            <person name="Coutinho P.M."/>
            <person name="Rancurel C."/>
            <person name="Saunders E.H."/>
            <person name="Longmire A.G."/>
            <person name="Zhang H."/>
            <person name="Bayer E.A."/>
            <person name="Gilbert H.J."/>
            <person name="Larimer F."/>
            <person name="Zhulin I.B."/>
            <person name="Ekborg N.A."/>
            <person name="Lamed R."/>
            <person name="Richardson P.M."/>
            <person name="Borovok I."/>
            <person name="Hutcheson S."/>
        </authorList>
    </citation>
    <scope>NUCLEOTIDE SEQUENCE [LARGE SCALE GENOMIC DNA]</scope>
    <source>
        <strain>2-40 / ATCC 43961 / DSM 17024</strain>
    </source>
</reference>
<protein>
    <recommendedName>
        <fullName evidence="1">Nucleoside diphosphate kinase</fullName>
        <shortName evidence="1">NDK</shortName>
        <shortName evidence="1">NDP kinase</shortName>
        <ecNumber evidence="1">2.7.4.6</ecNumber>
    </recommendedName>
    <alternativeName>
        <fullName evidence="1">Nucleoside-2-P kinase</fullName>
    </alternativeName>
</protein>
<gene>
    <name evidence="1" type="primary">ndk</name>
    <name type="ordered locus">Sde_1430</name>
</gene>
<feature type="chain" id="PRO_0000242515" description="Nucleoside diphosphate kinase">
    <location>
        <begin position="1"/>
        <end position="141"/>
    </location>
</feature>
<feature type="binding site" evidence="1">
    <location>
        <position position="11"/>
    </location>
    <ligand>
        <name>ATP</name>
        <dbReference type="ChEBI" id="CHEBI:30616"/>
    </ligand>
</feature>
<feature type="binding site" evidence="1">
    <location>
        <position position="59"/>
    </location>
    <ligand>
        <name>ATP</name>
        <dbReference type="ChEBI" id="CHEBI:30616"/>
    </ligand>
</feature>
<feature type="binding site" evidence="1">
    <location>
        <position position="87"/>
    </location>
    <ligand>
        <name>ATP</name>
        <dbReference type="ChEBI" id="CHEBI:30616"/>
    </ligand>
</feature>
<feature type="binding site" evidence="1">
    <location>
        <position position="93"/>
    </location>
    <ligand>
        <name>ATP</name>
        <dbReference type="ChEBI" id="CHEBI:30616"/>
    </ligand>
</feature>
<feature type="binding site" evidence="1">
    <location>
        <position position="104"/>
    </location>
    <ligand>
        <name>ATP</name>
        <dbReference type="ChEBI" id="CHEBI:30616"/>
    </ligand>
</feature>
<feature type="binding site" evidence="1">
    <location>
        <position position="114"/>
    </location>
    <ligand>
        <name>ATP</name>
        <dbReference type="ChEBI" id="CHEBI:30616"/>
    </ligand>
</feature>
<sequence length="141" mass="15381">MAIERTLSIVKPDAVEKNIIGKVISRFEKAGLKIVAAKMMHLTEEKARGFYAEHEGRPFFAGLVEFMTSGPVVVQVLEGENAIALNRELMGATNPAEAAEGTLRKDFADSVGRNAVYGSDSPASAEREINYFFDASEICPR</sequence>
<accession>Q21KT7</accession>
<organism>
    <name type="scientific">Saccharophagus degradans (strain 2-40 / ATCC 43961 / DSM 17024)</name>
    <dbReference type="NCBI Taxonomy" id="203122"/>
    <lineage>
        <taxon>Bacteria</taxon>
        <taxon>Pseudomonadati</taxon>
        <taxon>Pseudomonadota</taxon>
        <taxon>Gammaproteobacteria</taxon>
        <taxon>Cellvibrionales</taxon>
        <taxon>Cellvibrionaceae</taxon>
        <taxon>Saccharophagus</taxon>
    </lineage>
</organism>
<name>NDK_SACD2</name>
<dbReference type="EC" id="2.7.4.6" evidence="1"/>
<dbReference type="EMBL" id="CP000282">
    <property type="protein sequence ID" value="ABD80692.1"/>
    <property type="molecule type" value="Genomic_DNA"/>
</dbReference>
<dbReference type="RefSeq" id="WP_011467912.1">
    <property type="nucleotide sequence ID" value="NC_007912.1"/>
</dbReference>
<dbReference type="SMR" id="Q21KT7"/>
<dbReference type="STRING" id="203122.Sde_1430"/>
<dbReference type="GeneID" id="98613106"/>
<dbReference type="KEGG" id="sde:Sde_1430"/>
<dbReference type="eggNOG" id="COG0105">
    <property type="taxonomic scope" value="Bacteria"/>
</dbReference>
<dbReference type="HOGENOM" id="CLU_060216_8_1_6"/>
<dbReference type="OrthoDB" id="9801161at2"/>
<dbReference type="Proteomes" id="UP000001947">
    <property type="component" value="Chromosome"/>
</dbReference>
<dbReference type="GO" id="GO:0005737">
    <property type="term" value="C:cytoplasm"/>
    <property type="evidence" value="ECO:0007669"/>
    <property type="project" value="UniProtKB-SubCell"/>
</dbReference>
<dbReference type="GO" id="GO:0005524">
    <property type="term" value="F:ATP binding"/>
    <property type="evidence" value="ECO:0007669"/>
    <property type="project" value="UniProtKB-UniRule"/>
</dbReference>
<dbReference type="GO" id="GO:0046872">
    <property type="term" value="F:metal ion binding"/>
    <property type="evidence" value="ECO:0007669"/>
    <property type="project" value="UniProtKB-KW"/>
</dbReference>
<dbReference type="GO" id="GO:0004550">
    <property type="term" value="F:nucleoside diphosphate kinase activity"/>
    <property type="evidence" value="ECO:0007669"/>
    <property type="project" value="UniProtKB-UniRule"/>
</dbReference>
<dbReference type="GO" id="GO:0006241">
    <property type="term" value="P:CTP biosynthetic process"/>
    <property type="evidence" value="ECO:0007669"/>
    <property type="project" value="UniProtKB-UniRule"/>
</dbReference>
<dbReference type="GO" id="GO:0006183">
    <property type="term" value="P:GTP biosynthetic process"/>
    <property type="evidence" value="ECO:0007669"/>
    <property type="project" value="UniProtKB-UniRule"/>
</dbReference>
<dbReference type="GO" id="GO:0006228">
    <property type="term" value="P:UTP biosynthetic process"/>
    <property type="evidence" value="ECO:0007669"/>
    <property type="project" value="UniProtKB-UniRule"/>
</dbReference>
<dbReference type="CDD" id="cd04413">
    <property type="entry name" value="NDPk_I"/>
    <property type="match status" value="1"/>
</dbReference>
<dbReference type="FunFam" id="3.30.70.141:FF:000001">
    <property type="entry name" value="Nucleoside diphosphate kinase"/>
    <property type="match status" value="1"/>
</dbReference>
<dbReference type="Gene3D" id="3.30.70.141">
    <property type="entry name" value="Nucleoside diphosphate kinase-like domain"/>
    <property type="match status" value="1"/>
</dbReference>
<dbReference type="HAMAP" id="MF_00451">
    <property type="entry name" value="NDP_kinase"/>
    <property type="match status" value="1"/>
</dbReference>
<dbReference type="InterPro" id="IPR034907">
    <property type="entry name" value="NDK-like_dom"/>
</dbReference>
<dbReference type="InterPro" id="IPR036850">
    <property type="entry name" value="NDK-like_dom_sf"/>
</dbReference>
<dbReference type="InterPro" id="IPR001564">
    <property type="entry name" value="Nucleoside_diP_kinase"/>
</dbReference>
<dbReference type="NCBIfam" id="NF001908">
    <property type="entry name" value="PRK00668.1"/>
    <property type="match status" value="1"/>
</dbReference>
<dbReference type="PANTHER" id="PTHR11349">
    <property type="entry name" value="NUCLEOSIDE DIPHOSPHATE KINASE"/>
    <property type="match status" value="1"/>
</dbReference>
<dbReference type="Pfam" id="PF00334">
    <property type="entry name" value="NDK"/>
    <property type="match status" value="1"/>
</dbReference>
<dbReference type="PRINTS" id="PR01243">
    <property type="entry name" value="NUCDPKINASE"/>
</dbReference>
<dbReference type="SMART" id="SM00562">
    <property type="entry name" value="NDK"/>
    <property type="match status" value="1"/>
</dbReference>
<dbReference type="SUPFAM" id="SSF54919">
    <property type="entry name" value="Nucleoside diphosphate kinase, NDK"/>
    <property type="match status" value="1"/>
</dbReference>
<dbReference type="PROSITE" id="PS51374">
    <property type="entry name" value="NDPK_LIKE"/>
    <property type="match status" value="1"/>
</dbReference>
<proteinExistence type="inferred from homology"/>
<keyword id="KW-0067">ATP-binding</keyword>
<keyword id="KW-0963">Cytoplasm</keyword>
<keyword id="KW-0418">Kinase</keyword>
<keyword id="KW-0460">Magnesium</keyword>
<keyword id="KW-0479">Metal-binding</keyword>
<keyword id="KW-0546">Nucleotide metabolism</keyword>
<keyword id="KW-0547">Nucleotide-binding</keyword>
<keyword id="KW-0597">Phosphoprotein</keyword>
<keyword id="KW-1185">Reference proteome</keyword>
<keyword id="KW-0808">Transferase</keyword>
<evidence type="ECO:0000255" key="1">
    <source>
        <dbReference type="HAMAP-Rule" id="MF_00451"/>
    </source>
</evidence>